<feature type="chain" id="PRO_0000412368" description="Signal peptidase complex catalytic subunit SEC11">
    <location>
        <begin position="1"/>
        <end position="200"/>
    </location>
</feature>
<feature type="topological domain" description="Cytoplasmic" evidence="3">
    <location>
        <begin position="1"/>
        <end position="15"/>
    </location>
</feature>
<feature type="transmembrane region" description="Helical; Signal-anchor for type II membrane protein" evidence="3">
    <location>
        <begin position="16"/>
        <end position="33"/>
    </location>
</feature>
<feature type="topological domain" description="Lumenal" evidence="3">
    <location>
        <begin position="34"/>
        <end position="158"/>
    </location>
</feature>
<feature type="region of interest" description="Disordered" evidence="4">
    <location>
        <begin position="101"/>
        <end position="134"/>
    </location>
</feature>
<feature type="region of interest" description="C-terminal short (CTS) helix" evidence="2">
    <location>
        <begin position="186"/>
        <end position="197"/>
    </location>
</feature>
<feature type="compositionally biased region" description="Basic and acidic residues" evidence="4">
    <location>
        <begin position="103"/>
        <end position="119"/>
    </location>
</feature>
<feature type="active site" description="Charge relay system" evidence="1">
    <location>
        <position position="53"/>
    </location>
</feature>
<feature type="active site" description="Charge relay system" evidence="1">
    <location>
        <position position="92"/>
    </location>
</feature>
<feature type="active site" description="Charge relay system" evidence="1">
    <location>
        <position position="142"/>
    </location>
</feature>
<feature type="glycosylation site" description="N-linked (GlcNAc...) asparagine" evidence="3">
    <location>
        <position position="41"/>
    </location>
</feature>
<proteinExistence type="inferred from homology"/>
<dbReference type="EC" id="3.4.21.89" evidence="1"/>
<dbReference type="EMBL" id="ACYE01000121">
    <property type="protein sequence ID" value="EFE42883.1"/>
    <property type="molecule type" value="Genomic_DNA"/>
</dbReference>
<dbReference type="RefSeq" id="XP_003023501.1">
    <property type="nucleotide sequence ID" value="XM_003023455.1"/>
</dbReference>
<dbReference type="SMR" id="D4D5I1"/>
<dbReference type="MEROPS" id="S26.010"/>
<dbReference type="GlyCosmos" id="D4D5I1">
    <property type="glycosylation" value="1 site, No reported glycans"/>
</dbReference>
<dbReference type="GeneID" id="9583521"/>
<dbReference type="KEGG" id="tve:TRV_02351"/>
<dbReference type="HOGENOM" id="CLU_089996_0_0_1"/>
<dbReference type="OrthoDB" id="1010at34384"/>
<dbReference type="Proteomes" id="UP000008383">
    <property type="component" value="Unassembled WGS sequence"/>
</dbReference>
<dbReference type="GO" id="GO:0005787">
    <property type="term" value="C:signal peptidase complex"/>
    <property type="evidence" value="ECO:0007669"/>
    <property type="project" value="TreeGrafter"/>
</dbReference>
<dbReference type="GO" id="GO:0004252">
    <property type="term" value="F:serine-type endopeptidase activity"/>
    <property type="evidence" value="ECO:0007669"/>
    <property type="project" value="UniProtKB-EC"/>
</dbReference>
<dbReference type="GO" id="GO:0006465">
    <property type="term" value="P:signal peptide processing"/>
    <property type="evidence" value="ECO:0007669"/>
    <property type="project" value="InterPro"/>
</dbReference>
<dbReference type="CDD" id="cd06530">
    <property type="entry name" value="S26_SPase_I"/>
    <property type="match status" value="1"/>
</dbReference>
<dbReference type="InterPro" id="IPR036286">
    <property type="entry name" value="LexA/Signal_pep-like_sf"/>
</dbReference>
<dbReference type="InterPro" id="IPR019756">
    <property type="entry name" value="Pept_S26A_signal_pept_1_Ser-AS"/>
</dbReference>
<dbReference type="InterPro" id="IPR019533">
    <property type="entry name" value="Peptidase_S26"/>
</dbReference>
<dbReference type="InterPro" id="IPR001733">
    <property type="entry name" value="Peptidase_S26B"/>
</dbReference>
<dbReference type="NCBIfam" id="TIGR02228">
    <property type="entry name" value="sigpep_I_arch"/>
    <property type="match status" value="1"/>
</dbReference>
<dbReference type="PANTHER" id="PTHR10806">
    <property type="entry name" value="SIGNAL PEPTIDASE COMPLEX CATALYTIC SUBUNIT SEC11"/>
    <property type="match status" value="1"/>
</dbReference>
<dbReference type="PANTHER" id="PTHR10806:SF6">
    <property type="entry name" value="SIGNAL PEPTIDASE COMPLEX CATALYTIC SUBUNIT SEC11"/>
    <property type="match status" value="1"/>
</dbReference>
<dbReference type="SUPFAM" id="SSF51306">
    <property type="entry name" value="LexA/Signal peptidase"/>
    <property type="match status" value="1"/>
</dbReference>
<dbReference type="PROSITE" id="PS00501">
    <property type="entry name" value="SPASE_I_1"/>
    <property type="match status" value="1"/>
</dbReference>
<keyword id="KW-0256">Endoplasmic reticulum</keyword>
<keyword id="KW-0325">Glycoprotein</keyword>
<keyword id="KW-0378">Hydrolase</keyword>
<keyword id="KW-0472">Membrane</keyword>
<keyword id="KW-0645">Protease</keyword>
<keyword id="KW-0735">Signal-anchor</keyword>
<keyword id="KW-0812">Transmembrane</keyword>
<keyword id="KW-1133">Transmembrane helix</keyword>
<name>SEC11_TRIVH</name>
<gene>
    <name type="primary">SEC11</name>
    <name type="ORF">TRV_02351</name>
</gene>
<organism>
    <name type="scientific">Trichophyton verrucosum (strain HKI 0517)</name>
    <dbReference type="NCBI Taxonomy" id="663202"/>
    <lineage>
        <taxon>Eukaryota</taxon>
        <taxon>Fungi</taxon>
        <taxon>Dikarya</taxon>
        <taxon>Ascomycota</taxon>
        <taxon>Pezizomycotina</taxon>
        <taxon>Eurotiomycetes</taxon>
        <taxon>Eurotiomycetidae</taxon>
        <taxon>Onygenales</taxon>
        <taxon>Arthrodermataceae</taxon>
        <taxon>Trichophyton</taxon>
    </lineage>
</organism>
<evidence type="ECO:0000250" key="1">
    <source>
        <dbReference type="UniProtKB" id="P15367"/>
    </source>
</evidence>
<evidence type="ECO:0000250" key="2">
    <source>
        <dbReference type="UniProtKB" id="P67812"/>
    </source>
</evidence>
<evidence type="ECO:0000255" key="3"/>
<evidence type="ECO:0000256" key="4">
    <source>
        <dbReference type="SAM" id="MobiDB-lite"/>
    </source>
</evidence>
<evidence type="ECO:0000305" key="5"/>
<protein>
    <recommendedName>
        <fullName>Signal peptidase complex catalytic subunit SEC11</fullName>
        <ecNumber evidence="1">3.4.21.89</ecNumber>
    </recommendedName>
    <alternativeName>
        <fullName>Signal peptidase I</fullName>
    </alternativeName>
</protein>
<accession>D4D5I1</accession>
<comment type="function">
    <text evidence="1 2">Catalytic component of the signal peptidase complex (SPC) which catalyzes the cleavage of N-terminal signal sequences from nascent proteins as they are translocated into the lumen of the endoplasmic reticulum (By similarity). Specifically cleaves N-terminal signal peptides that contain a hydrophobic alpha-helix (h-region) shorter than 18-20 amino acids (By similarity).</text>
</comment>
<comment type="catalytic activity">
    <reaction evidence="1">
        <text>Cleavage of hydrophobic, N-terminal signal or leader sequences from secreted and periplasmic proteins.</text>
        <dbReference type="EC" id="3.4.21.89"/>
    </reaction>
</comment>
<comment type="subunit">
    <text evidence="1 2">Component of the signal peptidase complex (SPC) composed of a catalytic subunit SEC11 and three accessory subunits SPC1, SPC2 and SPC3 (By similarity). The complex induces a local thinning of the ER membrane which is used to measure the length of the signal peptide (SP) h-region of protein substrates. This ensures the selectivity of the complex towards h-regions shorter than 18-20 amino acids (By similarity). SPC associates with the translocon complex (By similarity).</text>
</comment>
<comment type="subcellular location">
    <subcellularLocation>
        <location evidence="1">Endoplasmic reticulum membrane</location>
        <topology evidence="1">Single-pass type II membrane protein</topology>
    </subcellularLocation>
</comment>
<comment type="domain">
    <text evidence="2">The C-terminal short (CTS) helix is essential for catalytic activity. It may be accommodated as a transmembrane helix in the thinned membrane environment of the complex, similarly to the signal peptide in the complex substrates.</text>
</comment>
<comment type="similarity">
    <text evidence="5">Belongs to the peptidase S26B family.</text>
</comment>
<reference key="1">
    <citation type="journal article" date="2011" name="Genome Biol.">
        <title>Comparative and functional genomics provide insights into the pathogenicity of dermatophytic fungi.</title>
        <authorList>
            <person name="Burmester A."/>
            <person name="Shelest E."/>
            <person name="Gloeckner G."/>
            <person name="Heddergott C."/>
            <person name="Schindler S."/>
            <person name="Staib P."/>
            <person name="Heidel A."/>
            <person name="Felder M."/>
            <person name="Petzold A."/>
            <person name="Szafranski K."/>
            <person name="Feuermann M."/>
            <person name="Pedruzzi I."/>
            <person name="Priebe S."/>
            <person name="Groth M."/>
            <person name="Winkler R."/>
            <person name="Li W."/>
            <person name="Kniemeyer O."/>
            <person name="Schroeckh V."/>
            <person name="Hertweck C."/>
            <person name="Hube B."/>
            <person name="White T.C."/>
            <person name="Platzer M."/>
            <person name="Guthke R."/>
            <person name="Heitman J."/>
            <person name="Woestemeyer J."/>
            <person name="Zipfel P.F."/>
            <person name="Monod M."/>
            <person name="Brakhage A.A."/>
        </authorList>
    </citation>
    <scope>NUCLEOTIDE SEQUENCE [LARGE SCALE GENOMIC DNA]</scope>
    <source>
        <strain>HKI 0517</strain>
    </source>
</reference>
<sequence>MFAELAPYLSNPRQTLAQLLNFALVLSTAFMGWKALSVYTNSSSPIVVVLSGSMEPAFQRGDLLFLWNNSPRAEVGEIVVYNVQGKDIPIVHRVIKAFGTGDGGKKSQRRLEREADKRSGPGLSSPVSHQMLTKGDNNIADDTELYAQGQDYLDRKLDIVGSVRGYIPAVGYVTIMLAENPWMKTVLLGIMGVMVMLQRE</sequence>